<evidence type="ECO:0000255" key="1">
    <source>
        <dbReference type="HAMAP-Rule" id="MF_00445"/>
    </source>
</evidence>
<evidence type="ECO:0000269" key="2">
    <source>
    </source>
</evidence>
<dbReference type="EC" id="7.1.1.-" evidence="1"/>
<dbReference type="EMBL" id="X90650">
    <property type="protein sequence ID" value="CAA62222.1"/>
    <property type="molecule type" value="Genomic_DNA"/>
</dbReference>
<dbReference type="EMBL" id="EF115541">
    <property type="protein sequence ID" value="ABK79455.1"/>
    <property type="status" value="ALT_SEQ"/>
    <property type="molecule type" value="Genomic_DNA"/>
</dbReference>
<dbReference type="PIR" id="S65075">
    <property type="entry name" value="S65075"/>
</dbReference>
<dbReference type="PIR" id="S65076">
    <property type="entry name" value="S65076"/>
</dbReference>
<dbReference type="PDB" id="7EU3">
    <property type="method" value="EM"/>
    <property type="resolution" value="3.70 A"/>
    <property type="chains" value="B=28-510"/>
</dbReference>
<dbReference type="PDBsum" id="7EU3"/>
<dbReference type="SMR" id="P0CC72"/>
<dbReference type="GO" id="GO:0009535">
    <property type="term" value="C:chloroplast thylakoid membrane"/>
    <property type="evidence" value="ECO:0007669"/>
    <property type="project" value="UniProtKB-SubCell"/>
</dbReference>
<dbReference type="GO" id="GO:0008137">
    <property type="term" value="F:NADH dehydrogenase (ubiquinone) activity"/>
    <property type="evidence" value="ECO:0007669"/>
    <property type="project" value="InterPro"/>
</dbReference>
<dbReference type="GO" id="GO:0048038">
    <property type="term" value="F:quinone binding"/>
    <property type="evidence" value="ECO:0007669"/>
    <property type="project" value="UniProtKB-KW"/>
</dbReference>
<dbReference type="GO" id="GO:0042773">
    <property type="term" value="P:ATP synthesis coupled electron transport"/>
    <property type="evidence" value="ECO:0007669"/>
    <property type="project" value="InterPro"/>
</dbReference>
<dbReference type="GO" id="GO:0019684">
    <property type="term" value="P:photosynthesis, light reaction"/>
    <property type="evidence" value="ECO:0007669"/>
    <property type="project" value="UniProtKB-UniRule"/>
</dbReference>
<dbReference type="HAMAP" id="MF_00445">
    <property type="entry name" value="NDH1_NuoN_1"/>
    <property type="match status" value="1"/>
</dbReference>
<dbReference type="InterPro" id="IPR010096">
    <property type="entry name" value="NADH-Q_OxRdtase_suN/2"/>
</dbReference>
<dbReference type="InterPro" id="IPR001750">
    <property type="entry name" value="ND/Mrp_TM"/>
</dbReference>
<dbReference type="InterPro" id="IPR045693">
    <property type="entry name" value="Ndh2_N"/>
</dbReference>
<dbReference type="NCBIfam" id="TIGR01770">
    <property type="entry name" value="NDH_I_N"/>
    <property type="match status" value="1"/>
</dbReference>
<dbReference type="NCBIfam" id="NF002701">
    <property type="entry name" value="PRK02504.1"/>
    <property type="match status" value="1"/>
</dbReference>
<dbReference type="PANTHER" id="PTHR22773">
    <property type="entry name" value="NADH DEHYDROGENASE"/>
    <property type="match status" value="1"/>
</dbReference>
<dbReference type="Pfam" id="PF19530">
    <property type="entry name" value="Ndh2_N"/>
    <property type="match status" value="1"/>
</dbReference>
<dbReference type="Pfam" id="PF00361">
    <property type="entry name" value="Proton_antipo_M"/>
    <property type="match status" value="1"/>
</dbReference>
<dbReference type="PRINTS" id="PR01434">
    <property type="entry name" value="NADHDHGNASE5"/>
</dbReference>
<accession>P0CC72</accession>
<accession>A1E9N4</accession>
<accession>Q33532</accession>
<sequence>MIWHVQNENFILDSTRIFMKAFHLLLFNGSFIFPECILIFGLILLLMIDLTSDQKDRPWFYFISSTSLVISITALLFRWREEPIISFSGNFQTNNFNEIFQFLILLCSTLCIPLSVEYIECTEMAITEFLLFVLTATLGGMFLCGANDLITIFVALECFSLCSYLLSGYTKRDLRSNEATMKYLLMGGASSSILVYGFSWLYGLSGGEIELQEIVNGLINTQMYNSPGISIALIFITVGLGFKLSLAPFHQWTPDVYEGSPTPVVAFLSVTSKVAALALATRILDIPFYFSSNEWHLLLEILAILSMILGNLLAITQTSMKRMLAYSSIGQIGYVIIGIIVGDSNDGYASMITYMLFYISMNLGTFACIVLFGLRTGTDNIRDYAGLYMKDPFLALSLALCLLSLGGLPPLAGFFGKLYLFWCGWQAGLYFLVSIGLLTSVLSIYYYLKIIKLLMTGRNQEITPYVRNYRRSPLRSNNSIELSMTVCVIASTILGISMNPILAIAQDTLF</sequence>
<reference key="1">
    <citation type="journal article" date="1995" name="Plant Mol. Biol.">
        <title>Editing of the chloroplast ndhB encoded transcript shows divergence between closely related members of the grass family (Poaceae).</title>
        <authorList>
            <person name="Freyer R."/>
            <person name="Lopez C."/>
            <person name="Maier R.M."/>
            <person name="Martin M."/>
            <person name="Sabater B."/>
            <person name="Koessel H."/>
        </authorList>
    </citation>
    <scope>NUCLEOTIDE SEQUENCE [GENOMIC DNA]</scope>
    <scope>RNA EDITING</scope>
</reference>
<reference key="2">
    <citation type="journal article" date="2007" name="Theor. Appl. Genet.">
        <title>Complete chloroplast genome sequences of Hordeum vulgare, Sorghum bicolor and Agrostis stolonifera, and comparative analyses with other grass genomes.</title>
        <authorList>
            <person name="Saski C."/>
            <person name="Lee S.-B."/>
            <person name="Fjellheim S."/>
            <person name="Guda C."/>
            <person name="Jansen R.K."/>
            <person name="Luo H."/>
            <person name="Tomkins J."/>
            <person name="Rognli O.A."/>
            <person name="Daniell H."/>
            <person name="Clarke J.L."/>
        </authorList>
    </citation>
    <scope>NUCLEOTIDE SEQUENCE [LARGE SCALE GENOMIC DNA]</scope>
    <source>
        <strain>cv. Morex</strain>
    </source>
</reference>
<keyword id="KW-0002">3D-structure</keyword>
<keyword id="KW-0150">Chloroplast</keyword>
<keyword id="KW-0472">Membrane</keyword>
<keyword id="KW-0520">NAD</keyword>
<keyword id="KW-0521">NADP</keyword>
<keyword id="KW-0934">Plastid</keyword>
<keyword id="KW-0618">Plastoquinone</keyword>
<keyword id="KW-0874">Quinone</keyword>
<keyword id="KW-0691">RNA editing</keyword>
<keyword id="KW-0793">Thylakoid</keyword>
<keyword id="KW-1278">Translocase</keyword>
<keyword id="KW-0812">Transmembrane</keyword>
<keyword id="KW-1133">Transmembrane helix</keyword>
<keyword id="KW-0813">Transport</keyword>
<feature type="chain" id="PRO_0000117660" description="NAD(P)H-quinone oxidoreductase subunit 2 A, chloroplastic">
    <location>
        <begin position="1"/>
        <end position="510"/>
    </location>
</feature>
<feature type="transmembrane region" description="Helical" evidence="1">
    <location>
        <begin position="31"/>
        <end position="51"/>
    </location>
</feature>
<feature type="transmembrane region" description="Helical" evidence="1">
    <location>
        <begin position="59"/>
        <end position="79"/>
    </location>
</feature>
<feature type="transmembrane region" description="Helical" evidence="1">
    <location>
        <begin position="99"/>
        <end position="119"/>
    </location>
</feature>
<feature type="transmembrane region" description="Helical" evidence="1">
    <location>
        <begin position="124"/>
        <end position="144"/>
    </location>
</feature>
<feature type="transmembrane region" description="Helical" evidence="1">
    <location>
        <begin position="149"/>
        <end position="169"/>
    </location>
</feature>
<feature type="transmembrane region" description="Helical" evidence="1">
    <location>
        <begin position="184"/>
        <end position="204"/>
    </location>
</feature>
<feature type="transmembrane region" description="Helical" evidence="1">
    <location>
        <begin position="229"/>
        <end position="249"/>
    </location>
</feature>
<feature type="transmembrane region" description="Helical" evidence="1">
    <location>
        <begin position="261"/>
        <end position="281"/>
    </location>
</feature>
<feature type="transmembrane region" description="Helical" evidence="1">
    <location>
        <begin position="295"/>
        <end position="315"/>
    </location>
</feature>
<feature type="transmembrane region" description="Helical" evidence="1">
    <location>
        <begin position="323"/>
        <end position="343"/>
    </location>
</feature>
<feature type="transmembrane region" description="Helical" evidence="1">
    <location>
        <begin position="354"/>
        <end position="374"/>
    </location>
</feature>
<feature type="transmembrane region" description="Helical" evidence="1">
    <location>
        <begin position="395"/>
        <end position="415"/>
    </location>
</feature>
<feature type="transmembrane region" description="Helical" evidence="1">
    <location>
        <begin position="418"/>
        <end position="438"/>
    </location>
</feature>
<feature type="transmembrane region" description="Helical" evidence="1">
    <location>
        <begin position="484"/>
        <end position="504"/>
    </location>
</feature>
<organism>
    <name type="scientific">Hordeum vulgare</name>
    <name type="common">Barley</name>
    <dbReference type="NCBI Taxonomy" id="4513"/>
    <lineage>
        <taxon>Eukaryota</taxon>
        <taxon>Viridiplantae</taxon>
        <taxon>Streptophyta</taxon>
        <taxon>Embryophyta</taxon>
        <taxon>Tracheophyta</taxon>
        <taxon>Spermatophyta</taxon>
        <taxon>Magnoliopsida</taxon>
        <taxon>Liliopsida</taxon>
        <taxon>Poales</taxon>
        <taxon>Poaceae</taxon>
        <taxon>BOP clade</taxon>
        <taxon>Pooideae</taxon>
        <taxon>Triticodae</taxon>
        <taxon>Triticeae</taxon>
        <taxon>Hordeinae</taxon>
        <taxon>Hordeum</taxon>
    </lineage>
</organism>
<comment type="function">
    <text evidence="1">NDH shuttles electrons from NAD(P)H:plastoquinone, via FMN and iron-sulfur (Fe-S) centers, to quinones in the photosynthetic chain and possibly in a chloroplast respiratory chain. The immediate electron acceptor for the enzyme in this species is believed to be plastoquinone. Couples the redox reaction to proton translocation, and thus conserves the redox energy in a proton gradient.</text>
</comment>
<comment type="catalytic activity">
    <reaction evidence="1">
        <text>a plastoquinone + NADH + (n+1) H(+)(in) = a plastoquinol + NAD(+) + n H(+)(out)</text>
        <dbReference type="Rhea" id="RHEA:42608"/>
        <dbReference type="Rhea" id="RHEA-COMP:9561"/>
        <dbReference type="Rhea" id="RHEA-COMP:9562"/>
        <dbReference type="ChEBI" id="CHEBI:15378"/>
        <dbReference type="ChEBI" id="CHEBI:17757"/>
        <dbReference type="ChEBI" id="CHEBI:57540"/>
        <dbReference type="ChEBI" id="CHEBI:57945"/>
        <dbReference type="ChEBI" id="CHEBI:62192"/>
    </reaction>
</comment>
<comment type="catalytic activity">
    <reaction evidence="1">
        <text>a plastoquinone + NADPH + (n+1) H(+)(in) = a plastoquinol + NADP(+) + n H(+)(out)</text>
        <dbReference type="Rhea" id="RHEA:42612"/>
        <dbReference type="Rhea" id="RHEA-COMP:9561"/>
        <dbReference type="Rhea" id="RHEA-COMP:9562"/>
        <dbReference type="ChEBI" id="CHEBI:15378"/>
        <dbReference type="ChEBI" id="CHEBI:17757"/>
        <dbReference type="ChEBI" id="CHEBI:57783"/>
        <dbReference type="ChEBI" id="CHEBI:58349"/>
        <dbReference type="ChEBI" id="CHEBI:62192"/>
    </reaction>
</comment>
<comment type="subunit">
    <text evidence="1">NDH is composed of at least 16 different subunits, 5 of which are encoded in the nucleus.</text>
</comment>
<comment type="subcellular location">
    <subcellularLocation>
        <location evidence="1">Plastid</location>
        <location evidence="1">Chloroplast thylakoid membrane</location>
        <topology evidence="1">Multi-pass membrane protein</topology>
    </subcellularLocation>
</comment>
<comment type="RNA editing">
    <location>
        <position position="50" evidence="2"/>
    </location>
    <location>
        <position position="156" evidence="2"/>
    </location>
    <location>
        <position position="196" evidence="2"/>
    </location>
    <location>
        <position position="204" evidence="2"/>
    </location>
    <location>
        <position position="235" evidence="2"/>
    </location>
    <location>
        <position position="246" evidence="2"/>
    </location>
    <location>
        <position position="277" evidence="2"/>
    </location>
    <location>
        <position position="279" evidence="2"/>
    </location>
    <location>
        <position position="494" evidence="2"/>
    </location>
</comment>
<comment type="similarity">
    <text evidence="1">Belongs to the complex I subunit 2 family.</text>
</comment>
<name>NU2C1_HORVU</name>
<proteinExistence type="evidence at protein level"/>
<protein>
    <recommendedName>
        <fullName evidence="1">NAD(P)H-quinone oxidoreductase subunit 2 A, chloroplastic</fullName>
        <ecNumber evidence="1">7.1.1.-</ecNumber>
    </recommendedName>
    <alternativeName>
        <fullName evidence="1">NAD(P)H dehydrogenase, subunit 2 A</fullName>
    </alternativeName>
    <alternativeName>
        <fullName evidence="1">NADH-plastoquinone oxidoreductase subunit 2 A</fullName>
    </alternativeName>
</protein>
<geneLocation type="chloroplast"/>
<gene>
    <name evidence="1" type="primary">ndhB1</name>
</gene>